<comment type="function">
    <text evidence="1">Synthesizes nicotianamine, a polyamine that is the first intermediate in the synthesis of the phytosiderophores of the mugineic acid type found in gramineae which serve as a sensor for the physiological iron status within the plant, and/or might be involved in the transport of iron.</text>
</comment>
<comment type="catalytic activity">
    <reaction>
        <text>3 S-adenosyl-L-methionine = nicotianamine + 3 S-methyl-5'-thioadenosine + 3 H(+)</text>
        <dbReference type="Rhea" id="RHEA:16481"/>
        <dbReference type="ChEBI" id="CHEBI:15378"/>
        <dbReference type="ChEBI" id="CHEBI:17509"/>
        <dbReference type="ChEBI" id="CHEBI:58249"/>
        <dbReference type="ChEBI" id="CHEBI:59789"/>
        <dbReference type="EC" id="2.5.1.43"/>
    </reaction>
</comment>
<comment type="tissue specificity">
    <text evidence="1">Expressed in roots.</text>
</comment>
<comment type="induction">
    <text evidence="1">By iron deficiency in roots and chlorotic leaves.</text>
</comment>
<comment type="similarity">
    <text evidence="2">Belongs to the nicotianamine synthase (NAS)-like family.</text>
</comment>
<reference key="1">
    <citation type="journal article" date="2001" name="Plant J.">
        <title>Nicotianamine synthase gene expression differs in barley and rice under Fe-deficient conditions.</title>
        <authorList>
            <person name="Higuchi K."/>
            <person name="Watanabe S."/>
            <person name="Takahashi M."/>
            <person name="Kawasaki S."/>
            <person name="Nakanishi H."/>
            <person name="Nishizawa N.-K."/>
            <person name="Mori S."/>
        </authorList>
    </citation>
    <scope>NUCLEOTIDE SEQUENCE [GENOMIC DNA / MRNA]</scope>
    <source>
        <strain>cv. IR36</strain>
        <tissue>Root</tissue>
    </source>
</reference>
<reference key="2">
    <citation type="journal article" date="2005" name="PLoS Biol.">
        <title>The genomes of Oryza sativa: a history of duplications.</title>
        <authorList>
            <person name="Yu J."/>
            <person name="Wang J."/>
            <person name="Lin W."/>
            <person name="Li S."/>
            <person name="Li H."/>
            <person name="Zhou J."/>
            <person name="Ni P."/>
            <person name="Dong W."/>
            <person name="Hu S."/>
            <person name="Zeng C."/>
            <person name="Zhang J."/>
            <person name="Zhang Y."/>
            <person name="Li R."/>
            <person name="Xu Z."/>
            <person name="Li S."/>
            <person name="Li X."/>
            <person name="Zheng H."/>
            <person name="Cong L."/>
            <person name="Lin L."/>
            <person name="Yin J."/>
            <person name="Geng J."/>
            <person name="Li G."/>
            <person name="Shi J."/>
            <person name="Liu J."/>
            <person name="Lv H."/>
            <person name="Li J."/>
            <person name="Wang J."/>
            <person name="Deng Y."/>
            <person name="Ran L."/>
            <person name="Shi X."/>
            <person name="Wang X."/>
            <person name="Wu Q."/>
            <person name="Li C."/>
            <person name="Ren X."/>
            <person name="Wang J."/>
            <person name="Wang X."/>
            <person name="Li D."/>
            <person name="Liu D."/>
            <person name="Zhang X."/>
            <person name="Ji Z."/>
            <person name="Zhao W."/>
            <person name="Sun Y."/>
            <person name="Zhang Z."/>
            <person name="Bao J."/>
            <person name="Han Y."/>
            <person name="Dong L."/>
            <person name="Ji J."/>
            <person name="Chen P."/>
            <person name="Wu S."/>
            <person name="Liu J."/>
            <person name="Xiao Y."/>
            <person name="Bu D."/>
            <person name="Tan J."/>
            <person name="Yang L."/>
            <person name="Ye C."/>
            <person name="Zhang J."/>
            <person name="Xu J."/>
            <person name="Zhou Y."/>
            <person name="Yu Y."/>
            <person name="Zhang B."/>
            <person name="Zhuang S."/>
            <person name="Wei H."/>
            <person name="Liu B."/>
            <person name="Lei M."/>
            <person name="Yu H."/>
            <person name="Li Y."/>
            <person name="Xu H."/>
            <person name="Wei S."/>
            <person name="He X."/>
            <person name="Fang L."/>
            <person name="Zhang Z."/>
            <person name="Zhang Y."/>
            <person name="Huang X."/>
            <person name="Su Z."/>
            <person name="Tong W."/>
            <person name="Li J."/>
            <person name="Tong Z."/>
            <person name="Li S."/>
            <person name="Ye J."/>
            <person name="Wang L."/>
            <person name="Fang L."/>
            <person name="Lei T."/>
            <person name="Chen C.-S."/>
            <person name="Chen H.-C."/>
            <person name="Xu Z."/>
            <person name="Li H."/>
            <person name="Huang H."/>
            <person name="Zhang F."/>
            <person name="Xu H."/>
            <person name="Li N."/>
            <person name="Zhao C."/>
            <person name="Li S."/>
            <person name="Dong L."/>
            <person name="Huang Y."/>
            <person name="Li L."/>
            <person name="Xi Y."/>
            <person name="Qi Q."/>
            <person name="Li W."/>
            <person name="Zhang B."/>
            <person name="Hu W."/>
            <person name="Zhang Y."/>
            <person name="Tian X."/>
            <person name="Jiao Y."/>
            <person name="Liang X."/>
            <person name="Jin J."/>
            <person name="Gao L."/>
            <person name="Zheng W."/>
            <person name="Hao B."/>
            <person name="Liu S.-M."/>
            <person name="Wang W."/>
            <person name="Yuan L."/>
            <person name="Cao M."/>
            <person name="McDermott J."/>
            <person name="Samudrala R."/>
            <person name="Wang J."/>
            <person name="Wong G.K.-S."/>
            <person name="Yang H."/>
        </authorList>
    </citation>
    <scope>NUCLEOTIDE SEQUENCE [LARGE SCALE GENOMIC DNA]</scope>
    <source>
        <strain>cv. 93-11</strain>
    </source>
</reference>
<reference key="3">
    <citation type="journal article" date="2003" name="Plant J.">
        <title>Three rice nicotianamine synthase genes, OsNAS1, OsNAS2, and OsNAS3 are expressed in cells involved in long-distance transport of iron and differentially regulated by iron.</title>
        <authorList>
            <person name="Inoue H."/>
            <person name="Higuchi K."/>
            <person name="Takahashi M."/>
            <person name="Nakanishi H."/>
            <person name="Mori S."/>
            <person name="Nishizawa N.K."/>
        </authorList>
    </citation>
    <scope>FUNCTION</scope>
    <scope>TISSUE SPECIFICITY</scope>
    <scope>INDUCTION</scope>
</reference>
<sequence>MEAQNQEVAALVEKIAGLHAAISKLPSLSPSAEVDALFTDLVTACVPASPVDVAKLGPEAQAMREELIRLCSAAEGHLEAHYADMLAAFDNPLDHLARFPYYGNYVNLSKLEYDLLVRYVPGIAPTRVAFVGSGPLPFSSLVLAAHHLPDAVFDNYDRCGAANERARRLFRGADEGLGARMAFHTADVATLTGELGAYDVVFLAALVGMAAEEKAGVIAHLGAHMADGAALVVSARHGARGFLYPIVDLEDIRRGGFDVLAVYHPDDEVINSVIVARKADPRRGGGLAGARGAVPVVSPPCKCCKMEAAAGAFQKAEEFAAKRLSV</sequence>
<dbReference type="EC" id="2.5.1.43"/>
<dbReference type="EMBL" id="AB023818">
    <property type="protein sequence ID" value="BAB17823.1"/>
    <property type="molecule type" value="mRNA"/>
</dbReference>
<dbReference type="EMBL" id="AB046401">
    <property type="protein sequence ID" value="BAB17826.1"/>
    <property type="molecule type" value="Genomic_DNA"/>
</dbReference>
<dbReference type="EMBL" id="CM000128">
    <property type="status" value="NOT_ANNOTATED_CDS"/>
    <property type="molecule type" value="Genomic_DNA"/>
</dbReference>
<dbReference type="SMR" id="A2XFU5"/>
<dbReference type="STRING" id="39946.A2XFU5"/>
<dbReference type="BioCyc" id="MetaCyc:MONOMER-13937"/>
<dbReference type="BRENDA" id="2.5.1.43">
    <property type="organism ID" value="11590"/>
</dbReference>
<dbReference type="Proteomes" id="UP000007015">
    <property type="component" value="Chromosome 3"/>
</dbReference>
<dbReference type="GO" id="GO:0030410">
    <property type="term" value="F:nicotianamine synthase activity"/>
    <property type="evidence" value="ECO:0007669"/>
    <property type="project" value="UniProtKB-EC"/>
</dbReference>
<dbReference type="GO" id="GO:0030418">
    <property type="term" value="P:nicotianamine biosynthetic process"/>
    <property type="evidence" value="ECO:0007669"/>
    <property type="project" value="InterPro"/>
</dbReference>
<dbReference type="Gene3D" id="3.40.50.150">
    <property type="entry name" value="Vaccinia Virus protein VP39"/>
    <property type="match status" value="1"/>
</dbReference>
<dbReference type="InterPro" id="IPR004298">
    <property type="entry name" value="Nicotian_synth"/>
</dbReference>
<dbReference type="InterPro" id="IPR029063">
    <property type="entry name" value="SAM-dependent_MTases_sf"/>
</dbReference>
<dbReference type="PANTHER" id="PTHR32266:SF10">
    <property type="entry name" value="NICOTIANAMINE SYNTHASE 2"/>
    <property type="match status" value="1"/>
</dbReference>
<dbReference type="PANTHER" id="PTHR32266">
    <property type="entry name" value="NICOTIANAMINE SYNTHASE 3"/>
    <property type="match status" value="1"/>
</dbReference>
<dbReference type="Pfam" id="PF03059">
    <property type="entry name" value="NAS"/>
    <property type="match status" value="1"/>
</dbReference>
<dbReference type="SUPFAM" id="SSF53335">
    <property type="entry name" value="S-adenosyl-L-methionine-dependent methyltransferases"/>
    <property type="match status" value="1"/>
</dbReference>
<dbReference type="PROSITE" id="PS51142">
    <property type="entry name" value="NAS"/>
    <property type="match status" value="1"/>
</dbReference>
<organism>
    <name type="scientific">Oryza sativa subsp. indica</name>
    <name type="common">Rice</name>
    <dbReference type="NCBI Taxonomy" id="39946"/>
    <lineage>
        <taxon>Eukaryota</taxon>
        <taxon>Viridiplantae</taxon>
        <taxon>Streptophyta</taxon>
        <taxon>Embryophyta</taxon>
        <taxon>Tracheophyta</taxon>
        <taxon>Spermatophyta</taxon>
        <taxon>Magnoliopsida</taxon>
        <taxon>Liliopsida</taxon>
        <taxon>Poales</taxon>
        <taxon>Poaceae</taxon>
        <taxon>BOP clade</taxon>
        <taxon>Oryzoideae</taxon>
        <taxon>Oryzeae</taxon>
        <taxon>Oryzinae</taxon>
        <taxon>Oryza</taxon>
        <taxon>Oryza sativa</taxon>
    </lineage>
</organism>
<feature type="chain" id="PRO_0000300239" description="Nicotianamine synthase 2">
    <location>
        <begin position="1"/>
        <end position="326"/>
    </location>
</feature>
<feature type="sequence conflict" description="In Ref. 1; BAB17823/BAB17826." evidence="2" ref="1">
    <original>SA</original>
    <variation>R</variation>
    <location>
        <begin position="234"/>
        <end position="235"/>
    </location>
</feature>
<accession>A2XFU5</accession>
<accession>Q9FEG8</accession>
<gene>
    <name type="primary">NAS2</name>
    <name type="ORF">OsI_010938</name>
</gene>
<name>NAS2_ORYSI</name>
<proteinExistence type="evidence at transcript level"/>
<keyword id="KW-1185">Reference proteome</keyword>
<keyword id="KW-0949">S-adenosyl-L-methionine</keyword>
<keyword id="KW-0808">Transferase</keyword>
<protein>
    <recommendedName>
        <fullName>Nicotianamine synthase 2</fullName>
        <ecNumber>2.5.1.43</ecNumber>
    </recommendedName>
    <alternativeName>
        <fullName>S-adenosyl-L-methionine:S-adenosyl-L-methionine:S-adenosyl-methionine 3-amino-3-carboxypropyltransferase 2</fullName>
        <shortName>OsNAS2</shortName>
    </alternativeName>
</protein>
<evidence type="ECO:0000269" key="1">
    <source>
    </source>
</evidence>
<evidence type="ECO:0000305" key="2"/>